<keyword id="KW-0349">Heme</keyword>
<keyword id="KW-0408">Iron</keyword>
<keyword id="KW-0479">Metal-binding</keyword>
<keyword id="KW-0503">Monooxygenase</keyword>
<keyword id="KW-0560">Oxidoreductase</keyword>
<keyword id="KW-0732">Signal</keyword>
<protein>
    <recommendedName>
        <fullName evidence="4">Cytochrome P450 monooxygenase AFLA_114810</fullName>
        <ecNumber evidence="4">1.-.-.-</ecNumber>
    </recommendedName>
</protein>
<feature type="signal peptide" evidence="2">
    <location>
        <begin position="1"/>
        <end position="17"/>
    </location>
</feature>
<feature type="chain" id="PRO_0000438559" description="Cytochrome P450 monooxygenase AFLA_114810">
    <location>
        <begin position="18"/>
        <end position="510"/>
    </location>
</feature>
<feature type="binding site" description="axial binding residue" evidence="1">
    <location>
        <position position="444"/>
    </location>
    <ligand>
        <name>heme</name>
        <dbReference type="ChEBI" id="CHEBI:30413"/>
    </ligand>
    <ligandPart>
        <name>Fe</name>
        <dbReference type="ChEBI" id="CHEBI:18248"/>
    </ligandPart>
</feature>
<reference key="1">
    <citation type="journal article" date="2015" name="Genome Announc.">
        <title>Genome sequence of Aspergillus flavus NRRL 3357, a strain that causes aflatoxin contamination of food and feed.</title>
        <authorList>
            <person name="Nierman W.C."/>
            <person name="Yu J."/>
            <person name="Fedorova-Abrams N.D."/>
            <person name="Losada L."/>
            <person name="Cleveland T.E."/>
            <person name="Bhatnagar D."/>
            <person name="Bennett J.W."/>
            <person name="Dean R."/>
            <person name="Payne G.A."/>
        </authorList>
    </citation>
    <scope>NUCLEOTIDE SEQUENCE [LARGE SCALE GENOMIC DNA]</scope>
    <source>
        <strain>ATCC 200026 / FGSC A1120 / IAM 13836 / NRRL 3357 / JCM 12722 / SRRC 167</strain>
    </source>
</reference>
<reference key="2">
    <citation type="journal article" date="2010" name="Mol. Plant Pathol.">
        <title>Beyond aflatoxin: four distinct expression patterns and functional roles associated with Aspergillus flavus secondary metabolism gene clusters.</title>
        <authorList>
            <person name="Georgianna D.R."/>
            <person name="Fedorova N.D."/>
            <person name="Burroughs J.L."/>
            <person name="Dolezal A.L."/>
            <person name="Bok J.W."/>
            <person name="Horowitz-Brown S."/>
            <person name="Woloshuk C.P."/>
            <person name="Yu J."/>
            <person name="Keller N.P."/>
            <person name="Payne G.A."/>
        </authorList>
    </citation>
    <scope>IDENTIFICATION OF THE GENE CLUSTER 41</scope>
</reference>
<reference key="3">
    <citation type="journal article" date="2016" name="Fungal Biol.">
        <title>The Aspergillus flavus fluP-associated metabolite promotes sclerotial production.</title>
        <authorList>
            <person name="Chang P.K."/>
            <person name="Scharfenstein L.L."/>
            <person name="Ehrlich K.C."/>
            <person name="Diana Di Mavungu J."/>
        </authorList>
    </citation>
    <scope>FUNCTION</scope>
</reference>
<dbReference type="EC" id="1.-.-.-" evidence="4"/>
<dbReference type="EMBL" id="EQ963487">
    <property type="protein sequence ID" value="EED44779.1"/>
    <property type="molecule type" value="Genomic_DNA"/>
</dbReference>
<dbReference type="RefSeq" id="XP_002385534.1">
    <property type="nucleotide sequence ID" value="XM_002385493.1"/>
</dbReference>
<dbReference type="SMR" id="B8NYW9"/>
<dbReference type="EnsemblFungi" id="EED44779">
    <property type="protein sequence ID" value="EED44779"/>
    <property type="gene ID" value="AFLA_114810"/>
</dbReference>
<dbReference type="VEuPathDB" id="FungiDB:AFLA_012950"/>
<dbReference type="eggNOG" id="KOG0157">
    <property type="taxonomic scope" value="Eukaryota"/>
</dbReference>
<dbReference type="HOGENOM" id="CLU_001570_14_0_1"/>
<dbReference type="OMA" id="PWVINRH"/>
<dbReference type="GO" id="GO:0020037">
    <property type="term" value="F:heme binding"/>
    <property type="evidence" value="ECO:0007669"/>
    <property type="project" value="InterPro"/>
</dbReference>
<dbReference type="GO" id="GO:0005506">
    <property type="term" value="F:iron ion binding"/>
    <property type="evidence" value="ECO:0007669"/>
    <property type="project" value="InterPro"/>
</dbReference>
<dbReference type="GO" id="GO:0004497">
    <property type="term" value="F:monooxygenase activity"/>
    <property type="evidence" value="ECO:0007669"/>
    <property type="project" value="UniProtKB-KW"/>
</dbReference>
<dbReference type="GO" id="GO:0016705">
    <property type="term" value="F:oxidoreductase activity, acting on paired donors, with incorporation or reduction of molecular oxygen"/>
    <property type="evidence" value="ECO:0007669"/>
    <property type="project" value="InterPro"/>
</dbReference>
<dbReference type="CDD" id="cd11060">
    <property type="entry name" value="CYP57A1-like"/>
    <property type="match status" value="1"/>
</dbReference>
<dbReference type="FunFam" id="1.10.630.10:FF:000050">
    <property type="entry name" value="Cytochrome P450 monooxygenase"/>
    <property type="match status" value="1"/>
</dbReference>
<dbReference type="Gene3D" id="1.10.630.10">
    <property type="entry name" value="Cytochrome P450"/>
    <property type="match status" value="1"/>
</dbReference>
<dbReference type="InterPro" id="IPR001128">
    <property type="entry name" value="Cyt_P450"/>
</dbReference>
<dbReference type="InterPro" id="IPR017972">
    <property type="entry name" value="Cyt_P450_CS"/>
</dbReference>
<dbReference type="InterPro" id="IPR002403">
    <property type="entry name" value="Cyt_P450_E_grp-IV"/>
</dbReference>
<dbReference type="InterPro" id="IPR036396">
    <property type="entry name" value="Cyt_P450_sf"/>
</dbReference>
<dbReference type="InterPro" id="IPR050121">
    <property type="entry name" value="Cytochrome_P450_monoxygenase"/>
</dbReference>
<dbReference type="PANTHER" id="PTHR24305">
    <property type="entry name" value="CYTOCHROME P450"/>
    <property type="match status" value="1"/>
</dbReference>
<dbReference type="PANTHER" id="PTHR24305:SF175">
    <property type="entry name" value="CYTOCHROME P450 MONOOXYGENASE PKFB"/>
    <property type="match status" value="1"/>
</dbReference>
<dbReference type="Pfam" id="PF00067">
    <property type="entry name" value="p450"/>
    <property type="match status" value="1"/>
</dbReference>
<dbReference type="PRINTS" id="PR00465">
    <property type="entry name" value="EP450IV"/>
</dbReference>
<dbReference type="PRINTS" id="PR00385">
    <property type="entry name" value="P450"/>
</dbReference>
<dbReference type="SUPFAM" id="SSF48264">
    <property type="entry name" value="Cytochrome P450"/>
    <property type="match status" value="1"/>
</dbReference>
<dbReference type="PROSITE" id="PS00086">
    <property type="entry name" value="CYTOCHROME_P450"/>
    <property type="match status" value="1"/>
</dbReference>
<evidence type="ECO:0000250" key="1">
    <source>
        <dbReference type="UniProtKB" id="P04798"/>
    </source>
</evidence>
<evidence type="ECO:0000255" key="2"/>
<evidence type="ECO:0000269" key="3">
    <source>
    </source>
</evidence>
<evidence type="ECO:0000305" key="4"/>
<evidence type="ECO:0000305" key="5">
    <source>
    </source>
</evidence>
<accession>B8NYW9</accession>
<gene>
    <name type="ORF">AFLA_114810</name>
</gene>
<organism>
    <name type="scientific">Aspergillus flavus (strain ATCC 200026 / FGSC A1120 / IAM 13836 / NRRL 3357 / JCM 12722 / SRRC 167)</name>
    <dbReference type="NCBI Taxonomy" id="332952"/>
    <lineage>
        <taxon>Eukaryota</taxon>
        <taxon>Fungi</taxon>
        <taxon>Dikarya</taxon>
        <taxon>Ascomycota</taxon>
        <taxon>Pezizomycotina</taxon>
        <taxon>Eurotiomycetes</taxon>
        <taxon>Eurotiomycetidae</taxon>
        <taxon>Eurotiales</taxon>
        <taxon>Aspergillaceae</taxon>
        <taxon>Aspergillus</taxon>
        <taxon>Aspergillus subgen. Circumdati</taxon>
    </lineage>
</organism>
<comment type="function">
    <text evidence="3">Cytochrome P450 monooxygenase; part of the gene cluster 41 that mediates the biosynthesis of an extracellular and diffusible metabolite that is able to stimulate colony sclerotial production (PubMed:27647242).</text>
</comment>
<comment type="cofactor">
    <cofactor evidence="1">
        <name>heme</name>
        <dbReference type="ChEBI" id="CHEBI:30413"/>
    </cofactor>
</comment>
<comment type="pathway">
    <text evidence="5">Secondary metabolite biosynthesis.</text>
</comment>
<comment type="similarity">
    <text evidence="4">Belongs to the cytochrome P450 family.</text>
</comment>
<sequence>MLILLGLLCLYTGLYVARTYWRLRHFPGPLVARFTDLGRLWWVKTSRSHHHHMGLHSRYGQYVRLGPNMISISDPDAIPLVYPIRPGVPKSDFYRSMMPYTRKGRSLPLVFNTRDEDLHKRLKTPIAHLYSLSNILTFEAFVDQVLEILFRQFEERFVPDQAPFNLGNWLQYFAFDVMGTMSFSRRYGFLEKGRDDTGLLSAIWAFMKAAAPVTQMPWVDLVWNKNPFIALFRATPAQPILNVVLSRINDRRNELYSTTSTPEKVNERDFLSRFMHIQSNSDTIPPWAVTAWSFSNVIAGSDTTAVAMKTLWYNLLLHPATMHRLRKELVQAQQQSKLSHPFPAWNEISGLPYLNACVNEALRIHPPFCLPFERIVPAEGMTIGDHFFPGGTVIGMNPWVINRHRPTFGEDADAWRPERWLEDPARTRQMENTLLSFGAGRRVCLGKNIALLELKKLTSALVLHYELEIVNPEKFQSQNFFFFKQEGLYAAVKRRSAGSPELYPDDAVPH</sequence>
<proteinExistence type="inferred from homology"/>
<name>FLUA_ASPFN</name>